<gene>
    <name type="primary">phpP</name>
    <name type="synonym">pppL</name>
    <name type="ordered locus">spr1578</name>
</gene>
<name>PHPP_STRR6</name>
<evidence type="ECO:0000250" key="1"/>
<evidence type="ECO:0000255" key="2">
    <source>
        <dbReference type="PROSITE-ProRule" id="PRU01082"/>
    </source>
</evidence>
<evidence type="ECO:0000269" key="3">
    <source>
    </source>
</evidence>
<evidence type="ECO:0000305" key="4"/>
<comment type="function">
    <text evidence="1">Protein phosphatase able to dephosphorylate StkP-P and other phosphorylated protein substrates. PhpP and its cognate protein kinase StkP appear to constitute a functional signaling couple in vivo, PhpP's primary role being probably to control phosphorylation levels of StkP and of its targets. PhpP thus performs an essential control of StkP activity (By similarity).</text>
</comment>
<comment type="catalytic activity">
    <reaction>
        <text>O-phospho-L-seryl-[protein] + H2O = L-seryl-[protein] + phosphate</text>
        <dbReference type="Rhea" id="RHEA:20629"/>
        <dbReference type="Rhea" id="RHEA-COMP:9863"/>
        <dbReference type="Rhea" id="RHEA-COMP:11604"/>
        <dbReference type="ChEBI" id="CHEBI:15377"/>
        <dbReference type="ChEBI" id="CHEBI:29999"/>
        <dbReference type="ChEBI" id="CHEBI:43474"/>
        <dbReference type="ChEBI" id="CHEBI:83421"/>
        <dbReference type="EC" id="3.1.3.16"/>
    </reaction>
</comment>
<comment type="catalytic activity">
    <reaction>
        <text>O-phospho-L-threonyl-[protein] + H2O = L-threonyl-[protein] + phosphate</text>
        <dbReference type="Rhea" id="RHEA:47004"/>
        <dbReference type="Rhea" id="RHEA-COMP:11060"/>
        <dbReference type="Rhea" id="RHEA-COMP:11605"/>
        <dbReference type="ChEBI" id="CHEBI:15377"/>
        <dbReference type="ChEBI" id="CHEBI:30013"/>
        <dbReference type="ChEBI" id="CHEBI:43474"/>
        <dbReference type="ChEBI" id="CHEBI:61977"/>
        <dbReference type="EC" id="3.1.3.16"/>
    </reaction>
</comment>
<comment type="cofactor">
    <cofactor evidence="1">
        <name>Mn(2+)</name>
        <dbReference type="ChEBI" id="CHEBI:29035"/>
    </cofactor>
    <text evidence="1">Binds 2 manganese ions per subunit.</text>
</comment>
<comment type="subcellular location">
    <subcellularLocation>
        <location evidence="3">Cytoplasm</location>
    </subcellularLocation>
    <text>Mainly localizes to the midcell division sites. Delocalizes from the septum in the presence of antibiotics that target the latest stages of cell-wall biosynthesis and in cells that have stopped dividing.</text>
</comment>
<comment type="miscellaneous">
    <text>Overexpression of PhpP leads to a phenotype comparable to cells lacking stkP, with an increased cell length.</text>
</comment>
<comment type="similarity">
    <text evidence="4">Belongs to the PP2C family.</text>
</comment>
<keyword id="KW-0963">Cytoplasm</keyword>
<keyword id="KW-0378">Hydrolase</keyword>
<keyword id="KW-0464">Manganese</keyword>
<keyword id="KW-0479">Metal-binding</keyword>
<keyword id="KW-0904">Protein phosphatase</keyword>
<keyword id="KW-1185">Reference proteome</keyword>
<feature type="chain" id="PRO_0000418148" description="Protein phosphatase PhpP">
    <location>
        <begin position="1"/>
        <end position="246"/>
    </location>
</feature>
<feature type="domain" description="PPM-type phosphatase" evidence="2">
    <location>
        <begin position="2"/>
        <end position="240"/>
    </location>
</feature>
<feature type="binding site" evidence="1">
    <location>
        <position position="36"/>
    </location>
    <ligand>
        <name>Mn(2+)</name>
        <dbReference type="ChEBI" id="CHEBI:29035"/>
        <label>1</label>
    </ligand>
</feature>
<feature type="binding site" evidence="1">
    <location>
        <position position="36"/>
    </location>
    <ligand>
        <name>Mn(2+)</name>
        <dbReference type="ChEBI" id="CHEBI:29035"/>
        <label>2</label>
    </ligand>
</feature>
<feature type="binding site" evidence="1">
    <location>
        <position position="37"/>
    </location>
    <ligand>
        <name>Mn(2+)</name>
        <dbReference type="ChEBI" id="CHEBI:29035"/>
        <label>1</label>
    </ligand>
</feature>
<feature type="binding site" evidence="1">
    <location>
        <position position="192"/>
    </location>
    <ligand>
        <name>Mn(2+)</name>
        <dbReference type="ChEBI" id="CHEBI:29035"/>
        <label>2</label>
    </ligand>
</feature>
<feature type="binding site" evidence="1">
    <location>
        <position position="231"/>
    </location>
    <ligand>
        <name>Mn(2+)</name>
        <dbReference type="ChEBI" id="CHEBI:29035"/>
        <label>2</label>
    </ligand>
</feature>
<sequence length="246" mass="27103">MEISLLTDVGQKRTNNQDYVNHYVNRAGRTMIILADGMGGHRAGNIASEMAVTDLGVAWVDTQIDTVNEVREWFAHYLEIENQKIHQLGQDEAYRGMGTTLEVLAIIDNQAIYAHIGDSRIGLIRGEEYHQLTSDHSLVNELLKAGQLTPEEAEAHPQKNIITQSIGQKDEIQPDFGTVILESGDYLLLNSDGLTNMISGSEIRDIVTSDIPLADKTETLVRFANNAGGLDNITVALVSMNEEDAE</sequence>
<organism>
    <name type="scientific">Streptococcus pneumoniae (strain ATCC BAA-255 / R6)</name>
    <dbReference type="NCBI Taxonomy" id="171101"/>
    <lineage>
        <taxon>Bacteria</taxon>
        <taxon>Bacillati</taxon>
        <taxon>Bacillota</taxon>
        <taxon>Bacilli</taxon>
        <taxon>Lactobacillales</taxon>
        <taxon>Streptococcaceae</taxon>
        <taxon>Streptococcus</taxon>
    </lineage>
</organism>
<dbReference type="EC" id="3.1.3.16"/>
<dbReference type="EMBL" id="AE007317">
    <property type="protein sequence ID" value="AAL00381.1"/>
    <property type="molecule type" value="Genomic_DNA"/>
</dbReference>
<dbReference type="PIR" id="H95201">
    <property type="entry name" value="H95201"/>
</dbReference>
<dbReference type="PIR" id="H98068">
    <property type="entry name" value="H98068"/>
</dbReference>
<dbReference type="RefSeq" id="NP_359170.1">
    <property type="nucleotide sequence ID" value="NC_003098.1"/>
</dbReference>
<dbReference type="RefSeq" id="WP_000406247.1">
    <property type="nucleotide sequence ID" value="NC_003098.1"/>
</dbReference>
<dbReference type="SMR" id="Q8DNR9"/>
<dbReference type="STRING" id="171101.spr1578"/>
<dbReference type="KEGG" id="spr:spr1578"/>
<dbReference type="PATRIC" id="fig|171101.6.peg.1705"/>
<dbReference type="eggNOG" id="COG0631">
    <property type="taxonomic scope" value="Bacteria"/>
</dbReference>
<dbReference type="HOGENOM" id="CLU_034545_4_1_9"/>
<dbReference type="Proteomes" id="UP000000586">
    <property type="component" value="Chromosome"/>
</dbReference>
<dbReference type="GO" id="GO:0005737">
    <property type="term" value="C:cytoplasm"/>
    <property type="evidence" value="ECO:0007669"/>
    <property type="project" value="UniProtKB-SubCell"/>
</dbReference>
<dbReference type="GO" id="GO:0046872">
    <property type="term" value="F:metal ion binding"/>
    <property type="evidence" value="ECO:0007669"/>
    <property type="project" value="UniProtKB-KW"/>
</dbReference>
<dbReference type="GO" id="GO:0004722">
    <property type="term" value="F:protein serine/threonine phosphatase activity"/>
    <property type="evidence" value="ECO:0007669"/>
    <property type="project" value="UniProtKB-EC"/>
</dbReference>
<dbReference type="GO" id="GO:0007165">
    <property type="term" value="P:signal transduction"/>
    <property type="evidence" value="ECO:0000318"/>
    <property type="project" value="GO_Central"/>
</dbReference>
<dbReference type="CDD" id="cd00143">
    <property type="entry name" value="PP2Cc"/>
    <property type="match status" value="1"/>
</dbReference>
<dbReference type="FunFam" id="3.60.40.10:FF:000002">
    <property type="entry name" value="Serine/threonine phosphatase stp"/>
    <property type="match status" value="1"/>
</dbReference>
<dbReference type="Gene3D" id="3.60.40.10">
    <property type="entry name" value="PPM-type phosphatase domain"/>
    <property type="match status" value="1"/>
</dbReference>
<dbReference type="InterPro" id="IPR015655">
    <property type="entry name" value="PP2C"/>
</dbReference>
<dbReference type="InterPro" id="IPR036457">
    <property type="entry name" value="PPM-type-like_dom_sf"/>
</dbReference>
<dbReference type="InterPro" id="IPR001932">
    <property type="entry name" value="PPM-type_phosphatase-like_dom"/>
</dbReference>
<dbReference type="NCBIfam" id="NF033484">
    <property type="entry name" value="Stp1_PP2C_phos"/>
    <property type="match status" value="1"/>
</dbReference>
<dbReference type="PANTHER" id="PTHR47992">
    <property type="entry name" value="PROTEIN PHOSPHATASE"/>
    <property type="match status" value="1"/>
</dbReference>
<dbReference type="Pfam" id="PF13672">
    <property type="entry name" value="PP2C_2"/>
    <property type="match status" value="1"/>
</dbReference>
<dbReference type="SMART" id="SM00331">
    <property type="entry name" value="PP2C_SIG"/>
    <property type="match status" value="1"/>
</dbReference>
<dbReference type="SMART" id="SM00332">
    <property type="entry name" value="PP2Cc"/>
    <property type="match status" value="1"/>
</dbReference>
<dbReference type="SUPFAM" id="SSF81606">
    <property type="entry name" value="PP2C-like"/>
    <property type="match status" value="1"/>
</dbReference>
<dbReference type="PROSITE" id="PS51746">
    <property type="entry name" value="PPM_2"/>
    <property type="match status" value="1"/>
</dbReference>
<accession>Q8DNR9</accession>
<protein>
    <recommendedName>
        <fullName>Protein phosphatase PhpP</fullName>
        <ecNumber>3.1.3.16</ecNumber>
    </recommendedName>
    <alternativeName>
        <fullName>PP2C-type phosphatase</fullName>
    </alternativeName>
    <alternativeName>
        <fullName>Ser/Thr phosphoprotein phosphatase</fullName>
        <shortName>STPP</shortName>
    </alternativeName>
</protein>
<reference key="1">
    <citation type="journal article" date="2001" name="J. Bacteriol.">
        <title>Genome of the bacterium Streptococcus pneumoniae strain R6.</title>
        <authorList>
            <person name="Hoskins J."/>
            <person name="Alborn W.E. Jr."/>
            <person name="Arnold J."/>
            <person name="Blaszczak L.C."/>
            <person name="Burgett S."/>
            <person name="DeHoff B.S."/>
            <person name="Estrem S.T."/>
            <person name="Fritz L."/>
            <person name="Fu D.-J."/>
            <person name="Fuller W."/>
            <person name="Geringer C."/>
            <person name="Gilmour R."/>
            <person name="Glass J.S."/>
            <person name="Khoja H."/>
            <person name="Kraft A.R."/>
            <person name="Lagace R.E."/>
            <person name="LeBlanc D.J."/>
            <person name="Lee L.N."/>
            <person name="Lefkowitz E.J."/>
            <person name="Lu J."/>
            <person name="Matsushima P."/>
            <person name="McAhren S.M."/>
            <person name="McHenney M."/>
            <person name="McLeaster K."/>
            <person name="Mundy C.W."/>
            <person name="Nicas T.I."/>
            <person name="Norris F.H."/>
            <person name="O'Gara M."/>
            <person name="Peery R.B."/>
            <person name="Robertson G.T."/>
            <person name="Rockey P."/>
            <person name="Sun P.-M."/>
            <person name="Winkler M.E."/>
            <person name="Yang Y."/>
            <person name="Young-Bellido M."/>
            <person name="Zhao G."/>
            <person name="Zook C.A."/>
            <person name="Baltz R.H."/>
            <person name="Jaskunas S.R."/>
            <person name="Rosteck P.R. Jr."/>
            <person name="Skatrud P.L."/>
            <person name="Glass J.I."/>
        </authorList>
    </citation>
    <scope>NUCLEOTIDE SEQUENCE [LARGE SCALE GENOMIC DNA]</scope>
    <source>
        <strain>ATCC BAA-255 / R6</strain>
    </source>
</reference>
<reference key="2">
    <citation type="journal article" date="2012" name="Proc. Natl. Acad. Sci. U.S.A.">
        <title>Control of cell division in Streptococcus pneumoniae by the conserved Ser/Thr protein kinase StkP.</title>
        <authorList>
            <person name="Beilharz K."/>
            <person name="Novakova L."/>
            <person name="Fadda D."/>
            <person name="Branny P."/>
            <person name="Massidda O."/>
            <person name="Veening J.W."/>
        </authorList>
    </citation>
    <scope>SUBCELLULAR LOCATION</scope>
    <scope>OVEREXPRESSION</scope>
    <source>
        <strain>ATCC BAA-255 / R6</strain>
    </source>
</reference>
<proteinExistence type="inferred from homology"/>